<accession>C0SPB9</accession>
<accession>O34625</accession>
<accession>Q796L1</accession>
<keyword id="KW-0328">Glycosyltransferase</keyword>
<keyword id="KW-1185">Reference proteome</keyword>
<keyword id="KW-0808">Transferase</keyword>
<dbReference type="EC" id="2.4.-.-"/>
<dbReference type="EMBL" id="AJ002571">
    <property type="protein sequence ID" value="CAA05612.1"/>
    <property type="molecule type" value="Genomic_DNA"/>
</dbReference>
<dbReference type="EMBL" id="AL009126">
    <property type="protein sequence ID" value="CAB13192.2"/>
    <property type="molecule type" value="Genomic_DNA"/>
</dbReference>
<dbReference type="PIR" id="B69860">
    <property type="entry name" value="B69860"/>
</dbReference>
<dbReference type="RefSeq" id="NP_389218.2">
    <property type="nucleotide sequence ID" value="NC_000964.3"/>
</dbReference>
<dbReference type="RefSeq" id="WP_003245161.1">
    <property type="nucleotide sequence ID" value="NZ_OZ025638.1"/>
</dbReference>
<dbReference type="SMR" id="C0SPB9"/>
<dbReference type="FunCoup" id="C0SPB9">
    <property type="interactions" value="161"/>
</dbReference>
<dbReference type="STRING" id="224308.BSU13350"/>
<dbReference type="CAZy" id="GT28">
    <property type="family name" value="Glycosyltransferase Family 28"/>
</dbReference>
<dbReference type="PaxDb" id="224308-BSU13350"/>
<dbReference type="DNASU" id="939390"/>
<dbReference type="EnsemblBacteria" id="CAB13192">
    <property type="protein sequence ID" value="CAB13192"/>
    <property type="gene ID" value="BSU_13350"/>
</dbReference>
<dbReference type="GeneID" id="939390"/>
<dbReference type="KEGG" id="bsu:BSU13350"/>
<dbReference type="PATRIC" id="fig|224308.179.peg.1450"/>
<dbReference type="eggNOG" id="COG0707">
    <property type="taxonomic scope" value="Bacteria"/>
</dbReference>
<dbReference type="InParanoid" id="C0SPB9"/>
<dbReference type="OrthoDB" id="9815663at2"/>
<dbReference type="PhylomeDB" id="C0SPB9"/>
<dbReference type="BioCyc" id="BSUB:BSU13350-MONOMER"/>
<dbReference type="Proteomes" id="UP000001570">
    <property type="component" value="Chromosome"/>
</dbReference>
<dbReference type="GO" id="GO:0016020">
    <property type="term" value="C:membrane"/>
    <property type="evidence" value="ECO:0007669"/>
    <property type="project" value="GOC"/>
</dbReference>
<dbReference type="GO" id="GO:0016758">
    <property type="term" value="F:hexosyltransferase activity"/>
    <property type="evidence" value="ECO:0007669"/>
    <property type="project" value="InterPro"/>
</dbReference>
<dbReference type="GO" id="GO:0009247">
    <property type="term" value="P:glycolipid biosynthetic process"/>
    <property type="evidence" value="ECO:0007669"/>
    <property type="project" value="InterPro"/>
</dbReference>
<dbReference type="Gene3D" id="3.40.50.2000">
    <property type="entry name" value="Glycogen Phosphorylase B"/>
    <property type="match status" value="1"/>
</dbReference>
<dbReference type="InterPro" id="IPR009695">
    <property type="entry name" value="Diacylglyc_glucosyltr_N"/>
</dbReference>
<dbReference type="InterPro" id="IPR050519">
    <property type="entry name" value="Glycosyltransf_28_UgtP"/>
</dbReference>
<dbReference type="PANTHER" id="PTHR43025">
    <property type="entry name" value="MONOGALACTOSYLDIACYLGLYCEROL SYNTHASE"/>
    <property type="match status" value="1"/>
</dbReference>
<dbReference type="PANTHER" id="PTHR43025:SF3">
    <property type="entry name" value="MONOGALACTOSYLDIACYLGLYCEROL SYNTHASE 1, CHLOROPLASTIC"/>
    <property type="match status" value="1"/>
</dbReference>
<dbReference type="Pfam" id="PF06925">
    <property type="entry name" value="MGDG_synth"/>
    <property type="match status" value="1"/>
</dbReference>
<dbReference type="SUPFAM" id="SSF53756">
    <property type="entry name" value="UDP-Glycosyltransferase/glycogen phosphorylase"/>
    <property type="match status" value="1"/>
</dbReference>
<evidence type="ECO:0000305" key="1"/>
<organism>
    <name type="scientific">Bacillus subtilis (strain 168)</name>
    <dbReference type="NCBI Taxonomy" id="224308"/>
    <lineage>
        <taxon>Bacteria</taxon>
        <taxon>Bacillati</taxon>
        <taxon>Bacillota</taxon>
        <taxon>Bacilli</taxon>
        <taxon>Bacillales</taxon>
        <taxon>Bacillaceae</taxon>
        <taxon>Bacillus</taxon>
    </lineage>
</organism>
<gene>
    <name type="primary">ykoN</name>
    <name type="ordered locus">BSU13350</name>
</gene>
<protein>
    <recommendedName>
        <fullName>Uncharacterized glycosyltransferase YkoN</fullName>
        <ecNumber>2.4.-.-</ecNumber>
    </recommendedName>
</protein>
<sequence length="373" mass="43577">MKNILIFPFLSISTGHHHVADALQAELESQGLAAEKIDIFSHSYRRLEKLSSVAYLKWIQYFPKTYSGIYRLLACGEFQHDKRYFMYEWLFTQQMRHILQEKQPDIAFCTHALPSYLLNRLKPEYPNLTVVNVYTDFFVNQLWGRKNIDYHFVPSTEVKKQLISEGIDQNNIYLTGIPVHQNFEMESADTLQHHPPYTIIITGGSMGVGGILKWVQELSPGGKILYKILCGRNEKLYSYVKSLHHPLIEAIPYLHSKAEMNRLYEQATGIMTKPGGVTISECLQKRLPVFIYHALPGQEEMNLNLLHERKLVTDMRNWDMQKAEEYIAAFFQSNEQMKEYKKHVNGYLGEMSDRKIKDVLKRIIWKQKNTLLK</sequence>
<reference key="1">
    <citation type="submission" date="1997-11" db="EMBL/GenBank/DDBJ databases">
        <title>Sequence of the Bacillus subtilis genome between xlyA and ykoR.</title>
        <authorList>
            <person name="Devine K.M."/>
        </authorList>
    </citation>
    <scope>NUCLEOTIDE SEQUENCE [GENOMIC DNA]</scope>
    <source>
        <strain>168</strain>
    </source>
</reference>
<reference key="2">
    <citation type="journal article" date="1997" name="Nature">
        <title>The complete genome sequence of the Gram-positive bacterium Bacillus subtilis.</title>
        <authorList>
            <person name="Kunst F."/>
            <person name="Ogasawara N."/>
            <person name="Moszer I."/>
            <person name="Albertini A.M."/>
            <person name="Alloni G."/>
            <person name="Azevedo V."/>
            <person name="Bertero M.G."/>
            <person name="Bessieres P."/>
            <person name="Bolotin A."/>
            <person name="Borchert S."/>
            <person name="Borriss R."/>
            <person name="Boursier L."/>
            <person name="Brans A."/>
            <person name="Braun M."/>
            <person name="Brignell S.C."/>
            <person name="Bron S."/>
            <person name="Brouillet S."/>
            <person name="Bruschi C.V."/>
            <person name="Caldwell B."/>
            <person name="Capuano V."/>
            <person name="Carter N.M."/>
            <person name="Choi S.-K."/>
            <person name="Codani J.-J."/>
            <person name="Connerton I.F."/>
            <person name="Cummings N.J."/>
            <person name="Daniel R.A."/>
            <person name="Denizot F."/>
            <person name="Devine K.M."/>
            <person name="Duesterhoeft A."/>
            <person name="Ehrlich S.D."/>
            <person name="Emmerson P.T."/>
            <person name="Entian K.-D."/>
            <person name="Errington J."/>
            <person name="Fabret C."/>
            <person name="Ferrari E."/>
            <person name="Foulger D."/>
            <person name="Fritz C."/>
            <person name="Fujita M."/>
            <person name="Fujita Y."/>
            <person name="Fuma S."/>
            <person name="Galizzi A."/>
            <person name="Galleron N."/>
            <person name="Ghim S.-Y."/>
            <person name="Glaser P."/>
            <person name="Goffeau A."/>
            <person name="Golightly E.J."/>
            <person name="Grandi G."/>
            <person name="Guiseppi G."/>
            <person name="Guy B.J."/>
            <person name="Haga K."/>
            <person name="Haiech J."/>
            <person name="Harwood C.R."/>
            <person name="Henaut A."/>
            <person name="Hilbert H."/>
            <person name="Holsappel S."/>
            <person name="Hosono S."/>
            <person name="Hullo M.-F."/>
            <person name="Itaya M."/>
            <person name="Jones L.-M."/>
            <person name="Joris B."/>
            <person name="Karamata D."/>
            <person name="Kasahara Y."/>
            <person name="Klaerr-Blanchard M."/>
            <person name="Klein C."/>
            <person name="Kobayashi Y."/>
            <person name="Koetter P."/>
            <person name="Koningstein G."/>
            <person name="Krogh S."/>
            <person name="Kumano M."/>
            <person name="Kurita K."/>
            <person name="Lapidus A."/>
            <person name="Lardinois S."/>
            <person name="Lauber J."/>
            <person name="Lazarevic V."/>
            <person name="Lee S.-M."/>
            <person name="Levine A."/>
            <person name="Liu H."/>
            <person name="Masuda S."/>
            <person name="Mauel C."/>
            <person name="Medigue C."/>
            <person name="Medina N."/>
            <person name="Mellado R.P."/>
            <person name="Mizuno M."/>
            <person name="Moestl D."/>
            <person name="Nakai S."/>
            <person name="Noback M."/>
            <person name="Noone D."/>
            <person name="O'Reilly M."/>
            <person name="Ogawa K."/>
            <person name="Ogiwara A."/>
            <person name="Oudega B."/>
            <person name="Park S.-H."/>
            <person name="Parro V."/>
            <person name="Pohl T.M."/>
            <person name="Portetelle D."/>
            <person name="Porwollik S."/>
            <person name="Prescott A.M."/>
            <person name="Presecan E."/>
            <person name="Pujic P."/>
            <person name="Purnelle B."/>
            <person name="Rapoport G."/>
            <person name="Rey M."/>
            <person name="Reynolds S."/>
            <person name="Rieger M."/>
            <person name="Rivolta C."/>
            <person name="Rocha E."/>
            <person name="Roche B."/>
            <person name="Rose M."/>
            <person name="Sadaie Y."/>
            <person name="Sato T."/>
            <person name="Scanlan E."/>
            <person name="Schleich S."/>
            <person name="Schroeter R."/>
            <person name="Scoffone F."/>
            <person name="Sekiguchi J."/>
            <person name="Sekowska A."/>
            <person name="Seror S.J."/>
            <person name="Serror P."/>
            <person name="Shin B.-S."/>
            <person name="Soldo B."/>
            <person name="Sorokin A."/>
            <person name="Tacconi E."/>
            <person name="Takagi T."/>
            <person name="Takahashi H."/>
            <person name="Takemaru K."/>
            <person name="Takeuchi M."/>
            <person name="Tamakoshi A."/>
            <person name="Tanaka T."/>
            <person name="Terpstra P."/>
            <person name="Tognoni A."/>
            <person name="Tosato V."/>
            <person name="Uchiyama S."/>
            <person name="Vandenbol M."/>
            <person name="Vannier F."/>
            <person name="Vassarotti A."/>
            <person name="Viari A."/>
            <person name="Wambutt R."/>
            <person name="Wedler E."/>
            <person name="Wedler H."/>
            <person name="Weitzenegger T."/>
            <person name="Winters P."/>
            <person name="Wipat A."/>
            <person name="Yamamoto H."/>
            <person name="Yamane K."/>
            <person name="Yasumoto K."/>
            <person name="Yata K."/>
            <person name="Yoshida K."/>
            <person name="Yoshikawa H.-F."/>
            <person name="Zumstein E."/>
            <person name="Yoshikawa H."/>
            <person name="Danchin A."/>
        </authorList>
    </citation>
    <scope>NUCLEOTIDE SEQUENCE [LARGE SCALE GENOMIC DNA]</scope>
    <source>
        <strain>168</strain>
    </source>
</reference>
<reference key="3">
    <citation type="journal article" date="2009" name="Microbiology">
        <title>From a consortium sequence to a unified sequence: the Bacillus subtilis 168 reference genome a decade later.</title>
        <authorList>
            <person name="Barbe V."/>
            <person name="Cruveiller S."/>
            <person name="Kunst F."/>
            <person name="Lenoble P."/>
            <person name="Meurice G."/>
            <person name="Sekowska A."/>
            <person name="Vallenet D."/>
            <person name="Wang T."/>
            <person name="Moszer I."/>
            <person name="Medigue C."/>
            <person name="Danchin A."/>
        </authorList>
    </citation>
    <scope>SEQUENCE REVISION TO 89-90</scope>
</reference>
<feature type="chain" id="PRO_0000384378" description="Uncharacterized glycosyltransferase YkoN">
    <location>
        <begin position="1"/>
        <end position="373"/>
    </location>
</feature>
<feature type="sequence conflict" description="In Ref. 1; CAA05612." evidence="1" ref="1">
    <original>WL</original>
    <variation>CV</variation>
    <location>
        <begin position="89"/>
        <end position="90"/>
    </location>
</feature>
<comment type="similarity">
    <text evidence="1">Belongs to the glycosyltransferase 28 family.</text>
</comment>
<proteinExistence type="inferred from homology"/>
<name>YKON_BACSU</name>